<gene>
    <name evidence="1" type="primary">clpX</name>
    <name type="ordered locus">Pcar_1688</name>
</gene>
<protein>
    <recommendedName>
        <fullName evidence="1">ATP-dependent Clp protease ATP-binding subunit ClpX</fullName>
    </recommendedName>
</protein>
<name>CLPX_SYNC1</name>
<feature type="chain" id="PRO_1000024607" description="ATP-dependent Clp protease ATP-binding subunit ClpX">
    <location>
        <begin position="1"/>
        <end position="416"/>
    </location>
</feature>
<feature type="domain" description="ClpX-type ZB" evidence="2">
    <location>
        <begin position="1"/>
        <end position="54"/>
    </location>
</feature>
<feature type="binding site" evidence="2">
    <location>
        <position position="13"/>
    </location>
    <ligand>
        <name>Zn(2+)</name>
        <dbReference type="ChEBI" id="CHEBI:29105"/>
    </ligand>
</feature>
<feature type="binding site" evidence="2">
    <location>
        <position position="16"/>
    </location>
    <ligand>
        <name>Zn(2+)</name>
        <dbReference type="ChEBI" id="CHEBI:29105"/>
    </ligand>
</feature>
<feature type="binding site" evidence="2">
    <location>
        <position position="35"/>
    </location>
    <ligand>
        <name>Zn(2+)</name>
        <dbReference type="ChEBI" id="CHEBI:29105"/>
    </ligand>
</feature>
<feature type="binding site" evidence="2">
    <location>
        <position position="38"/>
    </location>
    <ligand>
        <name>Zn(2+)</name>
        <dbReference type="ChEBI" id="CHEBI:29105"/>
    </ligand>
</feature>
<feature type="binding site" evidence="1">
    <location>
        <begin position="119"/>
        <end position="126"/>
    </location>
    <ligand>
        <name>ATP</name>
        <dbReference type="ChEBI" id="CHEBI:30616"/>
    </ligand>
</feature>
<sequence length="416" mass="45666">MSDHDGKSGYLTCSFCGKGQDDVKKLIAGPEVYICDECIELCKDIIAEEAKLEDDAESGPKRLPRPSEIKDALDEYVIGQEKAKKILSVAVYNHYKRVEMVQDGDDIEIQKSNILMLGPTGSGKTLLAQTLAKLLNVPFAIADATNLTEAGYVGEDVENIILSLLQAADYDLEKAQRGIIYIDEVDKIARKSDSPSITRDVSGEGVQQALLKIIEGTTASVPPKGGRKHPQQEFLKVDTTNILFICGGAFSGLESVIKQRSGTKALGFGAEIKEKKEEGVGEILARTEPMDLIRFGLIPEFVGRLPVVATLEELDEESLVRILKEPKNALVKQYQKLFEMEKVHLKFTDGALVAVAAEALKRKTGARGLRSIIENAMLDVMYDIPSQDRVKEVVINEDVIRQQGKPIIVYDCAESA</sequence>
<reference key="1">
    <citation type="submission" date="2005-10" db="EMBL/GenBank/DDBJ databases">
        <title>Complete sequence of Pelobacter carbinolicus DSM 2380.</title>
        <authorList>
            <person name="Copeland A."/>
            <person name="Lucas S."/>
            <person name="Lapidus A."/>
            <person name="Barry K."/>
            <person name="Detter J.C."/>
            <person name="Glavina T."/>
            <person name="Hammon N."/>
            <person name="Israni S."/>
            <person name="Pitluck S."/>
            <person name="Chertkov O."/>
            <person name="Schmutz J."/>
            <person name="Larimer F."/>
            <person name="Land M."/>
            <person name="Kyrpides N."/>
            <person name="Ivanova N."/>
            <person name="Richardson P."/>
        </authorList>
    </citation>
    <scope>NUCLEOTIDE SEQUENCE [LARGE SCALE GENOMIC DNA]</scope>
    <source>
        <strain>DSM 2380 / NBRC 103641 / GraBd1</strain>
    </source>
</reference>
<comment type="function">
    <text evidence="1">ATP-dependent specificity component of the Clp protease. It directs the protease to specific substrates. Can perform chaperone functions in the absence of ClpP.</text>
</comment>
<comment type="subunit">
    <text evidence="1">Component of the ClpX-ClpP complex. Forms a hexameric ring that, in the presence of ATP, binds to fourteen ClpP subunits assembled into a disk-like structure with a central cavity, resembling the structure of eukaryotic proteasomes.</text>
</comment>
<comment type="similarity">
    <text evidence="1">Belongs to the ClpX chaperone family.</text>
</comment>
<dbReference type="EMBL" id="CP000142">
    <property type="protein sequence ID" value="ABA88931.1"/>
    <property type="molecule type" value="Genomic_DNA"/>
</dbReference>
<dbReference type="RefSeq" id="WP_011341422.1">
    <property type="nucleotide sequence ID" value="NC_007498.2"/>
</dbReference>
<dbReference type="SMR" id="Q3A3X6"/>
<dbReference type="STRING" id="338963.Pcar_1688"/>
<dbReference type="KEGG" id="pca:Pcar_1688"/>
<dbReference type="eggNOG" id="COG1219">
    <property type="taxonomic scope" value="Bacteria"/>
</dbReference>
<dbReference type="HOGENOM" id="CLU_014218_8_2_7"/>
<dbReference type="OrthoDB" id="9804062at2"/>
<dbReference type="Proteomes" id="UP000002534">
    <property type="component" value="Chromosome"/>
</dbReference>
<dbReference type="GO" id="GO:0009376">
    <property type="term" value="C:HslUV protease complex"/>
    <property type="evidence" value="ECO:0007669"/>
    <property type="project" value="TreeGrafter"/>
</dbReference>
<dbReference type="GO" id="GO:0005524">
    <property type="term" value="F:ATP binding"/>
    <property type="evidence" value="ECO:0007669"/>
    <property type="project" value="UniProtKB-UniRule"/>
</dbReference>
<dbReference type="GO" id="GO:0016887">
    <property type="term" value="F:ATP hydrolysis activity"/>
    <property type="evidence" value="ECO:0007669"/>
    <property type="project" value="InterPro"/>
</dbReference>
<dbReference type="GO" id="GO:0140662">
    <property type="term" value="F:ATP-dependent protein folding chaperone"/>
    <property type="evidence" value="ECO:0007669"/>
    <property type="project" value="InterPro"/>
</dbReference>
<dbReference type="GO" id="GO:0046983">
    <property type="term" value="F:protein dimerization activity"/>
    <property type="evidence" value="ECO:0007669"/>
    <property type="project" value="InterPro"/>
</dbReference>
<dbReference type="GO" id="GO:0051082">
    <property type="term" value="F:unfolded protein binding"/>
    <property type="evidence" value="ECO:0007669"/>
    <property type="project" value="UniProtKB-UniRule"/>
</dbReference>
<dbReference type="GO" id="GO:0008270">
    <property type="term" value="F:zinc ion binding"/>
    <property type="evidence" value="ECO:0007669"/>
    <property type="project" value="InterPro"/>
</dbReference>
<dbReference type="GO" id="GO:0051301">
    <property type="term" value="P:cell division"/>
    <property type="evidence" value="ECO:0007669"/>
    <property type="project" value="TreeGrafter"/>
</dbReference>
<dbReference type="GO" id="GO:0051603">
    <property type="term" value="P:proteolysis involved in protein catabolic process"/>
    <property type="evidence" value="ECO:0007669"/>
    <property type="project" value="TreeGrafter"/>
</dbReference>
<dbReference type="CDD" id="cd19497">
    <property type="entry name" value="RecA-like_ClpX"/>
    <property type="match status" value="1"/>
</dbReference>
<dbReference type="FunFam" id="1.10.8.60:FF:000002">
    <property type="entry name" value="ATP-dependent Clp protease ATP-binding subunit ClpX"/>
    <property type="match status" value="1"/>
</dbReference>
<dbReference type="FunFam" id="3.40.50.300:FF:000005">
    <property type="entry name" value="ATP-dependent Clp protease ATP-binding subunit ClpX"/>
    <property type="match status" value="1"/>
</dbReference>
<dbReference type="Gene3D" id="1.10.8.60">
    <property type="match status" value="1"/>
</dbReference>
<dbReference type="Gene3D" id="6.20.220.10">
    <property type="entry name" value="ClpX chaperone, C4-type zinc finger domain"/>
    <property type="match status" value="1"/>
</dbReference>
<dbReference type="Gene3D" id="3.40.50.300">
    <property type="entry name" value="P-loop containing nucleotide triphosphate hydrolases"/>
    <property type="match status" value="1"/>
</dbReference>
<dbReference type="HAMAP" id="MF_00175">
    <property type="entry name" value="ClpX"/>
    <property type="match status" value="1"/>
</dbReference>
<dbReference type="InterPro" id="IPR003593">
    <property type="entry name" value="AAA+_ATPase"/>
</dbReference>
<dbReference type="InterPro" id="IPR050052">
    <property type="entry name" value="ATP-dep_Clp_protease_ClpX"/>
</dbReference>
<dbReference type="InterPro" id="IPR003959">
    <property type="entry name" value="ATPase_AAA_core"/>
</dbReference>
<dbReference type="InterPro" id="IPR019489">
    <property type="entry name" value="Clp_ATPase_C"/>
</dbReference>
<dbReference type="InterPro" id="IPR004487">
    <property type="entry name" value="Clp_protease_ATP-bd_su_ClpX"/>
</dbReference>
<dbReference type="InterPro" id="IPR046425">
    <property type="entry name" value="ClpX_bact"/>
</dbReference>
<dbReference type="InterPro" id="IPR027417">
    <property type="entry name" value="P-loop_NTPase"/>
</dbReference>
<dbReference type="InterPro" id="IPR010603">
    <property type="entry name" value="Znf_CppX_C4"/>
</dbReference>
<dbReference type="InterPro" id="IPR038366">
    <property type="entry name" value="Znf_CppX_C4_sf"/>
</dbReference>
<dbReference type="NCBIfam" id="TIGR00382">
    <property type="entry name" value="clpX"/>
    <property type="match status" value="1"/>
</dbReference>
<dbReference type="NCBIfam" id="NF003745">
    <property type="entry name" value="PRK05342.1"/>
    <property type="match status" value="1"/>
</dbReference>
<dbReference type="PANTHER" id="PTHR48102:SF7">
    <property type="entry name" value="ATP-DEPENDENT CLP PROTEASE ATP-BINDING SUBUNIT CLPX-LIKE, MITOCHONDRIAL"/>
    <property type="match status" value="1"/>
</dbReference>
<dbReference type="PANTHER" id="PTHR48102">
    <property type="entry name" value="ATP-DEPENDENT CLP PROTEASE ATP-BINDING SUBUNIT CLPX-LIKE, MITOCHONDRIAL-RELATED"/>
    <property type="match status" value="1"/>
</dbReference>
<dbReference type="Pfam" id="PF07724">
    <property type="entry name" value="AAA_2"/>
    <property type="match status" value="1"/>
</dbReference>
<dbReference type="Pfam" id="PF10431">
    <property type="entry name" value="ClpB_D2-small"/>
    <property type="match status" value="1"/>
</dbReference>
<dbReference type="Pfam" id="PF06689">
    <property type="entry name" value="zf-C4_ClpX"/>
    <property type="match status" value="1"/>
</dbReference>
<dbReference type="SMART" id="SM00382">
    <property type="entry name" value="AAA"/>
    <property type="match status" value="1"/>
</dbReference>
<dbReference type="SMART" id="SM01086">
    <property type="entry name" value="ClpB_D2-small"/>
    <property type="match status" value="1"/>
</dbReference>
<dbReference type="SMART" id="SM00994">
    <property type="entry name" value="zf-C4_ClpX"/>
    <property type="match status" value="1"/>
</dbReference>
<dbReference type="SUPFAM" id="SSF57716">
    <property type="entry name" value="Glucocorticoid receptor-like (DNA-binding domain)"/>
    <property type="match status" value="1"/>
</dbReference>
<dbReference type="SUPFAM" id="SSF52540">
    <property type="entry name" value="P-loop containing nucleoside triphosphate hydrolases"/>
    <property type="match status" value="1"/>
</dbReference>
<dbReference type="PROSITE" id="PS51902">
    <property type="entry name" value="CLPX_ZB"/>
    <property type="match status" value="1"/>
</dbReference>
<proteinExistence type="inferred from homology"/>
<organism>
    <name type="scientific">Syntrophotalea carbinolica (strain DSM 2380 / NBRC 103641 / GraBd1)</name>
    <name type="common">Pelobacter carbinolicus</name>
    <dbReference type="NCBI Taxonomy" id="338963"/>
    <lineage>
        <taxon>Bacteria</taxon>
        <taxon>Pseudomonadati</taxon>
        <taxon>Thermodesulfobacteriota</taxon>
        <taxon>Desulfuromonadia</taxon>
        <taxon>Desulfuromonadales</taxon>
        <taxon>Syntrophotaleaceae</taxon>
        <taxon>Syntrophotalea</taxon>
    </lineage>
</organism>
<keyword id="KW-0067">ATP-binding</keyword>
<keyword id="KW-0143">Chaperone</keyword>
<keyword id="KW-0479">Metal-binding</keyword>
<keyword id="KW-0547">Nucleotide-binding</keyword>
<keyword id="KW-1185">Reference proteome</keyword>
<keyword id="KW-0862">Zinc</keyword>
<accession>Q3A3X6</accession>
<evidence type="ECO:0000255" key="1">
    <source>
        <dbReference type="HAMAP-Rule" id="MF_00175"/>
    </source>
</evidence>
<evidence type="ECO:0000255" key="2">
    <source>
        <dbReference type="PROSITE-ProRule" id="PRU01250"/>
    </source>
</evidence>